<feature type="chain" id="PRO_0000334880" description="Ribonuclease HII">
    <location>
        <begin position="1"/>
        <end position="269"/>
    </location>
</feature>
<feature type="domain" description="RNase H type-2" evidence="2">
    <location>
        <begin position="83"/>
        <end position="269"/>
    </location>
</feature>
<feature type="binding site" evidence="1">
    <location>
        <position position="89"/>
    </location>
    <ligand>
        <name>a divalent metal cation</name>
        <dbReference type="ChEBI" id="CHEBI:60240"/>
    </ligand>
</feature>
<feature type="binding site" evidence="1">
    <location>
        <position position="90"/>
    </location>
    <ligand>
        <name>a divalent metal cation</name>
        <dbReference type="ChEBI" id="CHEBI:60240"/>
    </ligand>
</feature>
<feature type="binding site" evidence="1">
    <location>
        <position position="185"/>
    </location>
    <ligand>
        <name>a divalent metal cation</name>
        <dbReference type="ChEBI" id="CHEBI:60240"/>
    </ligand>
</feature>
<evidence type="ECO:0000255" key="1">
    <source>
        <dbReference type="HAMAP-Rule" id="MF_00052"/>
    </source>
</evidence>
<evidence type="ECO:0000255" key="2">
    <source>
        <dbReference type="PROSITE-ProRule" id="PRU01319"/>
    </source>
</evidence>
<accession>B1KWN1</accession>
<name>RNH2_CLOBM</name>
<proteinExistence type="inferred from homology"/>
<reference key="1">
    <citation type="journal article" date="2007" name="PLoS ONE">
        <title>Analysis of the neurotoxin complex genes in Clostridium botulinum A1-A4 and B1 strains: BoNT/A3, /Ba4 and /B1 clusters are located within plasmids.</title>
        <authorList>
            <person name="Smith T.J."/>
            <person name="Hill K.K."/>
            <person name="Foley B.T."/>
            <person name="Detter J.C."/>
            <person name="Munk A.C."/>
            <person name="Bruce D.C."/>
            <person name="Doggett N.A."/>
            <person name="Smith L.A."/>
            <person name="Marks J.D."/>
            <person name="Xie G."/>
            <person name="Brettin T.S."/>
        </authorList>
    </citation>
    <scope>NUCLEOTIDE SEQUENCE [LARGE SCALE GENOMIC DNA]</scope>
    <source>
        <strain>Loch Maree / Type A3</strain>
    </source>
</reference>
<comment type="function">
    <text evidence="1">Endonuclease that specifically degrades the RNA of RNA-DNA hybrids.</text>
</comment>
<comment type="catalytic activity">
    <reaction evidence="1">
        <text>Endonucleolytic cleavage to 5'-phosphomonoester.</text>
        <dbReference type="EC" id="3.1.26.4"/>
    </reaction>
</comment>
<comment type="cofactor">
    <cofactor evidence="1">
        <name>Mn(2+)</name>
        <dbReference type="ChEBI" id="CHEBI:29035"/>
    </cofactor>
    <cofactor evidence="1">
        <name>Mg(2+)</name>
        <dbReference type="ChEBI" id="CHEBI:18420"/>
    </cofactor>
    <text evidence="1">Manganese or magnesium. Binds 1 divalent metal ion per monomer in the absence of substrate. May bind a second metal ion after substrate binding.</text>
</comment>
<comment type="subcellular location">
    <subcellularLocation>
        <location evidence="1">Cytoplasm</location>
    </subcellularLocation>
</comment>
<comment type="similarity">
    <text evidence="1">Belongs to the RNase HII family.</text>
</comment>
<keyword id="KW-0963">Cytoplasm</keyword>
<keyword id="KW-0255">Endonuclease</keyword>
<keyword id="KW-0378">Hydrolase</keyword>
<keyword id="KW-0464">Manganese</keyword>
<keyword id="KW-0479">Metal-binding</keyword>
<keyword id="KW-0540">Nuclease</keyword>
<gene>
    <name evidence="1" type="primary">rnhB</name>
    <name type="ordered locus">CLK_1818</name>
</gene>
<organism>
    <name type="scientific">Clostridium botulinum (strain Loch Maree / Type A3)</name>
    <dbReference type="NCBI Taxonomy" id="498214"/>
    <lineage>
        <taxon>Bacteria</taxon>
        <taxon>Bacillati</taxon>
        <taxon>Bacillota</taxon>
        <taxon>Clostridia</taxon>
        <taxon>Eubacteriales</taxon>
        <taxon>Clostridiaceae</taxon>
        <taxon>Clostridium</taxon>
    </lineage>
</organism>
<protein>
    <recommendedName>
        <fullName evidence="1">Ribonuclease HII</fullName>
        <shortName evidence="1">RNase HII</shortName>
        <ecNumber evidence="1">3.1.26.4</ecNumber>
    </recommendedName>
</protein>
<sequence length="269" mass="31065">MNLNNLENIRYNEIKEFSDKIKKEFTFSQEKQVMDIIEKLNKDPRKNVIKLGQALEKFLNKYEEELKRTNNMYNFDRRYGNNYLIAGVDEVGRGPLAGPIVAAAVVLDLNVEEMQRIFNIKDSKKLSEKKREELDIIIREKAISYNIALVDNKTIDERGISWSNNEVLKRAVEGLKVKPDLVLSDGYAVKNLNIRNEFIIKGDSKSISIASSSIIAKVYRDNMMKEYSKELNMYGFNHNAGYGTEEHVQAIKKYGPSKIHRMSFLTNIL</sequence>
<dbReference type="EC" id="3.1.26.4" evidence="1"/>
<dbReference type="EMBL" id="CP000962">
    <property type="protein sequence ID" value="ACA55832.1"/>
    <property type="molecule type" value="Genomic_DNA"/>
</dbReference>
<dbReference type="RefSeq" id="WP_012343764.1">
    <property type="nucleotide sequence ID" value="NC_010520.1"/>
</dbReference>
<dbReference type="SMR" id="B1KWN1"/>
<dbReference type="KEGG" id="cbl:CLK_1818"/>
<dbReference type="HOGENOM" id="CLU_036532_2_1_9"/>
<dbReference type="GO" id="GO:0005737">
    <property type="term" value="C:cytoplasm"/>
    <property type="evidence" value="ECO:0007669"/>
    <property type="project" value="UniProtKB-SubCell"/>
</dbReference>
<dbReference type="GO" id="GO:0032299">
    <property type="term" value="C:ribonuclease H2 complex"/>
    <property type="evidence" value="ECO:0007669"/>
    <property type="project" value="TreeGrafter"/>
</dbReference>
<dbReference type="GO" id="GO:0030145">
    <property type="term" value="F:manganese ion binding"/>
    <property type="evidence" value="ECO:0007669"/>
    <property type="project" value="UniProtKB-UniRule"/>
</dbReference>
<dbReference type="GO" id="GO:0003723">
    <property type="term" value="F:RNA binding"/>
    <property type="evidence" value="ECO:0007669"/>
    <property type="project" value="InterPro"/>
</dbReference>
<dbReference type="GO" id="GO:0004523">
    <property type="term" value="F:RNA-DNA hybrid ribonuclease activity"/>
    <property type="evidence" value="ECO:0007669"/>
    <property type="project" value="UniProtKB-UniRule"/>
</dbReference>
<dbReference type="GO" id="GO:0043137">
    <property type="term" value="P:DNA replication, removal of RNA primer"/>
    <property type="evidence" value="ECO:0007669"/>
    <property type="project" value="TreeGrafter"/>
</dbReference>
<dbReference type="GO" id="GO:0006298">
    <property type="term" value="P:mismatch repair"/>
    <property type="evidence" value="ECO:0007669"/>
    <property type="project" value="TreeGrafter"/>
</dbReference>
<dbReference type="CDD" id="cd07182">
    <property type="entry name" value="RNase_HII_bacteria_HII_like"/>
    <property type="match status" value="1"/>
</dbReference>
<dbReference type="FunFam" id="3.30.420.10:FF:000113">
    <property type="entry name" value="Ribonuclease HII"/>
    <property type="match status" value="1"/>
</dbReference>
<dbReference type="Gene3D" id="3.30.420.10">
    <property type="entry name" value="Ribonuclease H-like superfamily/Ribonuclease H"/>
    <property type="match status" value="1"/>
</dbReference>
<dbReference type="HAMAP" id="MF_00052_B">
    <property type="entry name" value="RNase_HII_B"/>
    <property type="match status" value="1"/>
</dbReference>
<dbReference type="InterPro" id="IPR022898">
    <property type="entry name" value="RNase_HII"/>
</dbReference>
<dbReference type="InterPro" id="IPR001352">
    <property type="entry name" value="RNase_HII/HIII"/>
</dbReference>
<dbReference type="InterPro" id="IPR024567">
    <property type="entry name" value="RNase_HII/HIII_dom"/>
</dbReference>
<dbReference type="InterPro" id="IPR012337">
    <property type="entry name" value="RNaseH-like_sf"/>
</dbReference>
<dbReference type="InterPro" id="IPR036397">
    <property type="entry name" value="RNaseH_sf"/>
</dbReference>
<dbReference type="NCBIfam" id="NF000594">
    <property type="entry name" value="PRK00015.1-1"/>
    <property type="match status" value="1"/>
</dbReference>
<dbReference type="NCBIfam" id="NF000595">
    <property type="entry name" value="PRK00015.1-3"/>
    <property type="match status" value="1"/>
</dbReference>
<dbReference type="PANTHER" id="PTHR10954">
    <property type="entry name" value="RIBONUCLEASE H2 SUBUNIT A"/>
    <property type="match status" value="1"/>
</dbReference>
<dbReference type="PANTHER" id="PTHR10954:SF18">
    <property type="entry name" value="RIBONUCLEASE HII"/>
    <property type="match status" value="1"/>
</dbReference>
<dbReference type="Pfam" id="PF01351">
    <property type="entry name" value="RNase_HII"/>
    <property type="match status" value="1"/>
</dbReference>
<dbReference type="SUPFAM" id="SSF53098">
    <property type="entry name" value="Ribonuclease H-like"/>
    <property type="match status" value="1"/>
</dbReference>
<dbReference type="PROSITE" id="PS51975">
    <property type="entry name" value="RNASE_H_2"/>
    <property type="match status" value="1"/>
</dbReference>